<protein>
    <recommendedName>
        <fullName evidence="1">Putative pre-16S rRNA nuclease</fullName>
        <ecNumber evidence="1">3.1.-.-</ecNumber>
    </recommendedName>
</protein>
<feature type="chain" id="PRO_0000172125" description="Putative pre-16S rRNA nuclease">
    <location>
        <begin position="1"/>
        <end position="173"/>
    </location>
</feature>
<organism>
    <name type="scientific">Rhodopirellula baltica (strain DSM 10527 / NCIMB 13988 / SH1)</name>
    <dbReference type="NCBI Taxonomy" id="243090"/>
    <lineage>
        <taxon>Bacteria</taxon>
        <taxon>Pseudomonadati</taxon>
        <taxon>Planctomycetota</taxon>
        <taxon>Planctomycetia</taxon>
        <taxon>Pirellulales</taxon>
        <taxon>Pirellulaceae</taxon>
        <taxon>Rhodopirellula</taxon>
    </lineage>
</organism>
<sequence>MPTTTTTAEDGFPATGRLASVDYGTVRIGVAICDPDWILASPLEVHPVSTPEKDAQYFIDLAKSERIAAWVVGLPIHCDGGESDKSKESRKFAAWLKETTGLPTRLFDERFTTVAANAKIRQGKTTRKKTKQRVDAVAAQVLLESFLEACRYRGELAGHCLEDSTSDESLDDA</sequence>
<reference key="1">
    <citation type="journal article" date="2003" name="Proc. Natl. Acad. Sci. U.S.A.">
        <title>Complete genome sequence of the marine planctomycete Pirellula sp. strain 1.</title>
        <authorList>
            <person name="Gloeckner F.O."/>
            <person name="Kube M."/>
            <person name="Bauer M."/>
            <person name="Teeling H."/>
            <person name="Lombardot T."/>
            <person name="Ludwig W."/>
            <person name="Gade D."/>
            <person name="Beck A."/>
            <person name="Borzym K."/>
            <person name="Heitmann K."/>
            <person name="Rabus R."/>
            <person name="Schlesner H."/>
            <person name="Amann R."/>
            <person name="Reinhardt R."/>
        </authorList>
    </citation>
    <scope>NUCLEOTIDE SEQUENCE [LARGE SCALE GENOMIC DNA]</scope>
    <source>
        <strain>DSM 10527 / NCIMB 13988 / SH1</strain>
    </source>
</reference>
<comment type="function">
    <text evidence="1">Could be a nuclease involved in processing of the 5'-end of pre-16S rRNA.</text>
</comment>
<comment type="subcellular location">
    <subcellularLocation>
        <location evidence="1">Cytoplasm</location>
    </subcellularLocation>
</comment>
<comment type="similarity">
    <text evidence="1">Belongs to the YqgF nuclease family.</text>
</comment>
<accession>Q7UG74</accession>
<dbReference type="EC" id="3.1.-.-" evidence="1"/>
<dbReference type="EMBL" id="BX294147">
    <property type="protein sequence ID" value="CAD78455.1"/>
    <property type="molecule type" value="Genomic_DNA"/>
</dbReference>
<dbReference type="RefSeq" id="NP_868177.1">
    <property type="nucleotide sequence ID" value="NC_005027.1"/>
</dbReference>
<dbReference type="RefSeq" id="WP_007331673.1">
    <property type="nucleotide sequence ID" value="NC_005027.1"/>
</dbReference>
<dbReference type="SMR" id="Q7UG74"/>
<dbReference type="FunCoup" id="Q7UG74">
    <property type="interactions" value="305"/>
</dbReference>
<dbReference type="STRING" id="243090.RB8076"/>
<dbReference type="EnsemblBacteria" id="CAD78455">
    <property type="protein sequence ID" value="CAD78455"/>
    <property type="gene ID" value="RB8076"/>
</dbReference>
<dbReference type="KEGG" id="rba:RB8076"/>
<dbReference type="PATRIC" id="fig|243090.15.peg.3901"/>
<dbReference type="eggNOG" id="COG0816">
    <property type="taxonomic scope" value="Bacteria"/>
</dbReference>
<dbReference type="HOGENOM" id="CLU_098240_0_0_0"/>
<dbReference type="InParanoid" id="Q7UG74"/>
<dbReference type="OrthoDB" id="9790539at2"/>
<dbReference type="Proteomes" id="UP000001025">
    <property type="component" value="Chromosome"/>
</dbReference>
<dbReference type="GO" id="GO:0005737">
    <property type="term" value="C:cytoplasm"/>
    <property type="evidence" value="ECO:0007669"/>
    <property type="project" value="UniProtKB-SubCell"/>
</dbReference>
<dbReference type="GO" id="GO:0004518">
    <property type="term" value="F:nuclease activity"/>
    <property type="evidence" value="ECO:0007669"/>
    <property type="project" value="UniProtKB-KW"/>
</dbReference>
<dbReference type="GO" id="GO:0000967">
    <property type="term" value="P:rRNA 5'-end processing"/>
    <property type="evidence" value="ECO:0000318"/>
    <property type="project" value="GO_Central"/>
</dbReference>
<dbReference type="CDD" id="cd16964">
    <property type="entry name" value="YqgF"/>
    <property type="match status" value="1"/>
</dbReference>
<dbReference type="FunFam" id="3.30.420.140:FF:000026">
    <property type="entry name" value="Putative pre-16S rRNA nuclease"/>
    <property type="match status" value="1"/>
</dbReference>
<dbReference type="Gene3D" id="3.30.420.140">
    <property type="entry name" value="YqgF/RNase H-like domain"/>
    <property type="match status" value="1"/>
</dbReference>
<dbReference type="HAMAP" id="MF_00651">
    <property type="entry name" value="Nuclease_YqgF"/>
    <property type="match status" value="1"/>
</dbReference>
<dbReference type="InterPro" id="IPR012337">
    <property type="entry name" value="RNaseH-like_sf"/>
</dbReference>
<dbReference type="InterPro" id="IPR005227">
    <property type="entry name" value="YqgF"/>
</dbReference>
<dbReference type="InterPro" id="IPR006641">
    <property type="entry name" value="YqgF/RNaseH-like_dom"/>
</dbReference>
<dbReference type="InterPro" id="IPR037027">
    <property type="entry name" value="YqgF/RNaseH-like_dom_sf"/>
</dbReference>
<dbReference type="NCBIfam" id="TIGR00250">
    <property type="entry name" value="RNAse_H_YqgF"/>
    <property type="match status" value="1"/>
</dbReference>
<dbReference type="PANTHER" id="PTHR33317">
    <property type="entry name" value="POLYNUCLEOTIDYL TRANSFERASE, RIBONUCLEASE H-LIKE SUPERFAMILY PROTEIN"/>
    <property type="match status" value="1"/>
</dbReference>
<dbReference type="PANTHER" id="PTHR33317:SF4">
    <property type="entry name" value="POLYNUCLEOTIDYL TRANSFERASE, RIBONUCLEASE H-LIKE SUPERFAMILY PROTEIN"/>
    <property type="match status" value="1"/>
</dbReference>
<dbReference type="Pfam" id="PF03652">
    <property type="entry name" value="RuvX"/>
    <property type="match status" value="1"/>
</dbReference>
<dbReference type="SMART" id="SM00732">
    <property type="entry name" value="YqgFc"/>
    <property type="match status" value="1"/>
</dbReference>
<dbReference type="SUPFAM" id="SSF53098">
    <property type="entry name" value="Ribonuclease H-like"/>
    <property type="match status" value="1"/>
</dbReference>
<keyword id="KW-0963">Cytoplasm</keyword>
<keyword id="KW-0378">Hydrolase</keyword>
<keyword id="KW-0540">Nuclease</keyword>
<keyword id="KW-1185">Reference proteome</keyword>
<keyword id="KW-0690">Ribosome biogenesis</keyword>
<name>YQGF_RHOBA</name>
<gene>
    <name type="ordered locus">RB8076</name>
</gene>
<proteinExistence type="inferred from homology"/>
<evidence type="ECO:0000255" key="1">
    <source>
        <dbReference type="HAMAP-Rule" id="MF_00651"/>
    </source>
</evidence>